<dbReference type="EC" id="2.1.2.9" evidence="1"/>
<dbReference type="EMBL" id="CP000527">
    <property type="protein sequence ID" value="ABM27054.1"/>
    <property type="molecule type" value="Genomic_DNA"/>
</dbReference>
<dbReference type="RefSeq" id="WP_011791337.1">
    <property type="nucleotide sequence ID" value="NC_008751.1"/>
</dbReference>
<dbReference type="SMR" id="A1V9B4"/>
<dbReference type="KEGG" id="dvl:Dvul_0030"/>
<dbReference type="HOGENOM" id="CLU_033347_1_1_7"/>
<dbReference type="Proteomes" id="UP000009173">
    <property type="component" value="Chromosome"/>
</dbReference>
<dbReference type="GO" id="GO:0005829">
    <property type="term" value="C:cytosol"/>
    <property type="evidence" value="ECO:0007669"/>
    <property type="project" value="TreeGrafter"/>
</dbReference>
<dbReference type="GO" id="GO:0004479">
    <property type="term" value="F:methionyl-tRNA formyltransferase activity"/>
    <property type="evidence" value="ECO:0007669"/>
    <property type="project" value="UniProtKB-UniRule"/>
</dbReference>
<dbReference type="CDD" id="cd08646">
    <property type="entry name" value="FMT_core_Met-tRNA-FMT_N"/>
    <property type="match status" value="1"/>
</dbReference>
<dbReference type="CDD" id="cd08704">
    <property type="entry name" value="Met_tRNA_FMT_C"/>
    <property type="match status" value="1"/>
</dbReference>
<dbReference type="Gene3D" id="3.40.50.12230">
    <property type="match status" value="1"/>
</dbReference>
<dbReference type="HAMAP" id="MF_00182">
    <property type="entry name" value="Formyl_trans"/>
    <property type="match status" value="1"/>
</dbReference>
<dbReference type="InterPro" id="IPR005794">
    <property type="entry name" value="Fmt"/>
</dbReference>
<dbReference type="InterPro" id="IPR005793">
    <property type="entry name" value="Formyl_trans_C"/>
</dbReference>
<dbReference type="InterPro" id="IPR002376">
    <property type="entry name" value="Formyl_transf_N"/>
</dbReference>
<dbReference type="InterPro" id="IPR036477">
    <property type="entry name" value="Formyl_transf_N_sf"/>
</dbReference>
<dbReference type="InterPro" id="IPR011034">
    <property type="entry name" value="Formyl_transferase-like_C_sf"/>
</dbReference>
<dbReference type="InterPro" id="IPR001555">
    <property type="entry name" value="GART_AS"/>
</dbReference>
<dbReference type="InterPro" id="IPR044135">
    <property type="entry name" value="Met-tRNA-FMT_C"/>
</dbReference>
<dbReference type="InterPro" id="IPR041711">
    <property type="entry name" value="Met-tRNA-FMT_N"/>
</dbReference>
<dbReference type="NCBIfam" id="TIGR00460">
    <property type="entry name" value="fmt"/>
    <property type="match status" value="1"/>
</dbReference>
<dbReference type="PANTHER" id="PTHR11138">
    <property type="entry name" value="METHIONYL-TRNA FORMYLTRANSFERASE"/>
    <property type="match status" value="1"/>
</dbReference>
<dbReference type="PANTHER" id="PTHR11138:SF5">
    <property type="entry name" value="METHIONYL-TRNA FORMYLTRANSFERASE, MITOCHONDRIAL"/>
    <property type="match status" value="1"/>
</dbReference>
<dbReference type="Pfam" id="PF02911">
    <property type="entry name" value="Formyl_trans_C"/>
    <property type="match status" value="1"/>
</dbReference>
<dbReference type="Pfam" id="PF00551">
    <property type="entry name" value="Formyl_trans_N"/>
    <property type="match status" value="1"/>
</dbReference>
<dbReference type="SUPFAM" id="SSF50486">
    <property type="entry name" value="FMT C-terminal domain-like"/>
    <property type="match status" value="1"/>
</dbReference>
<dbReference type="SUPFAM" id="SSF53328">
    <property type="entry name" value="Formyltransferase"/>
    <property type="match status" value="1"/>
</dbReference>
<dbReference type="PROSITE" id="PS00373">
    <property type="entry name" value="GART"/>
    <property type="match status" value="1"/>
</dbReference>
<protein>
    <recommendedName>
        <fullName evidence="1">Methionyl-tRNA formyltransferase</fullName>
        <ecNumber evidence="1">2.1.2.9</ecNumber>
    </recommendedName>
</protein>
<comment type="function">
    <text evidence="1">Attaches a formyl group to the free amino group of methionyl-tRNA(fMet). The formyl group appears to play a dual role in the initiator identity of N-formylmethionyl-tRNA by promoting its recognition by IF2 and preventing the misappropriation of this tRNA by the elongation apparatus.</text>
</comment>
<comment type="catalytic activity">
    <reaction evidence="1">
        <text>L-methionyl-tRNA(fMet) + (6R)-10-formyltetrahydrofolate = N-formyl-L-methionyl-tRNA(fMet) + (6S)-5,6,7,8-tetrahydrofolate + H(+)</text>
        <dbReference type="Rhea" id="RHEA:24380"/>
        <dbReference type="Rhea" id="RHEA-COMP:9952"/>
        <dbReference type="Rhea" id="RHEA-COMP:9953"/>
        <dbReference type="ChEBI" id="CHEBI:15378"/>
        <dbReference type="ChEBI" id="CHEBI:57453"/>
        <dbReference type="ChEBI" id="CHEBI:78530"/>
        <dbReference type="ChEBI" id="CHEBI:78844"/>
        <dbReference type="ChEBI" id="CHEBI:195366"/>
        <dbReference type="EC" id="2.1.2.9"/>
    </reaction>
</comment>
<comment type="similarity">
    <text evidence="1">Belongs to the Fmt family.</text>
</comment>
<sequence length="330" mass="35224">MAESAPLKIVFMGTPDFAAASLRHLLAWDGCDVVGVYTQPDRPCGRGQQCRPSAVKMLALEHGLDVRQPVNFRDEADVQALRDFGADILVVAAYGLILPQSVLDAAPMGAVNVHGSLLPRYRGAAPIQRAVMNGDAVTGITIMQVVKQLDAGPMLLQKALGIGCDETSGQLHDQLAELGGRLLVETLARLRAGTIMPIPQDDALATYAAKLTKADGLVDWNRTAVEVHAQVRGVTPWPAAYFTLRREGQKDVRVTIEPGTIGPLLEQPAVPGTIVGLVDGAIAFACADRTYLVRTIRPADKKPMTGEAFWCGYLSRCEGECPGFAVCEGA</sequence>
<proteinExistence type="inferred from homology"/>
<feature type="chain" id="PRO_1000020054" description="Methionyl-tRNA formyltransferase">
    <location>
        <begin position="1"/>
        <end position="330"/>
    </location>
</feature>
<feature type="binding site" evidence="1">
    <location>
        <begin position="116"/>
        <end position="119"/>
    </location>
    <ligand>
        <name>(6S)-5,6,7,8-tetrahydrofolate</name>
        <dbReference type="ChEBI" id="CHEBI:57453"/>
    </ligand>
</feature>
<name>FMT_NITV4</name>
<reference key="1">
    <citation type="journal article" date="2009" name="Environ. Microbiol.">
        <title>Contribution of mobile genetic elements to Desulfovibrio vulgaris genome plasticity.</title>
        <authorList>
            <person name="Walker C.B."/>
            <person name="Stolyar S."/>
            <person name="Chivian D."/>
            <person name="Pinel N."/>
            <person name="Gabster J.A."/>
            <person name="Dehal P.S."/>
            <person name="He Z."/>
            <person name="Yang Z.K."/>
            <person name="Yen H.C."/>
            <person name="Zhou J."/>
            <person name="Wall J.D."/>
            <person name="Hazen T.C."/>
            <person name="Arkin A.P."/>
            <person name="Stahl D.A."/>
        </authorList>
    </citation>
    <scope>NUCLEOTIDE SEQUENCE [LARGE SCALE GENOMIC DNA]</scope>
    <source>
        <strain>DP4</strain>
    </source>
</reference>
<gene>
    <name evidence="1" type="primary">fmt</name>
    <name type="ordered locus">Dvul_0030</name>
</gene>
<keyword id="KW-0648">Protein biosynthesis</keyword>
<keyword id="KW-0808">Transferase</keyword>
<organism>
    <name type="scientific">Nitratidesulfovibrio vulgaris (strain DP4)</name>
    <name type="common">Desulfovibrio vulgaris</name>
    <dbReference type="NCBI Taxonomy" id="391774"/>
    <lineage>
        <taxon>Bacteria</taxon>
        <taxon>Pseudomonadati</taxon>
        <taxon>Thermodesulfobacteriota</taxon>
        <taxon>Desulfovibrionia</taxon>
        <taxon>Desulfovibrionales</taxon>
        <taxon>Desulfovibrionaceae</taxon>
        <taxon>Nitratidesulfovibrio</taxon>
    </lineage>
</organism>
<evidence type="ECO:0000255" key="1">
    <source>
        <dbReference type="HAMAP-Rule" id="MF_00182"/>
    </source>
</evidence>
<accession>A1V9B4</accession>